<proteinExistence type="inferred from homology"/>
<accession>P55837</accession>
<reference key="1">
    <citation type="journal article" date="1996" name="Microbiology">
        <title>Molecular analysis of a new insertion sequence from Actinobacillus (Haemophilus) actinomycetemcomitans FDC Y4.</title>
        <authorList>
            <person name="Hayashida H."/>
            <person name="Hotokezaka H."/>
            <person name="Ohara N."/>
            <person name="Kimura M."/>
            <person name="Takagi O."/>
            <person name="Yamada T."/>
        </authorList>
    </citation>
    <scope>NUCLEOTIDE SEQUENCE [GENOMIC DNA]</scope>
    <source>
        <strain>ATCC 43718 / FDC Y4 / Serotype b</strain>
    </source>
</reference>
<dbReference type="EMBL" id="D64071">
    <property type="protein sequence ID" value="BAA10954.1"/>
    <property type="molecule type" value="Genomic_DNA"/>
</dbReference>
<dbReference type="RefSeq" id="WP_005539359.1">
    <property type="nucleotide sequence ID" value="NZ_VSEW01000015.1"/>
</dbReference>
<dbReference type="SMR" id="P55837"/>
<dbReference type="STRING" id="714.ACT75_03725"/>
<dbReference type="GeneID" id="77210689"/>
<dbReference type="eggNOG" id="COG0197">
    <property type="taxonomic scope" value="Bacteria"/>
</dbReference>
<dbReference type="OMA" id="KGAVEYW"/>
<dbReference type="OrthoDB" id="9802589at2"/>
<dbReference type="GO" id="GO:0022625">
    <property type="term" value="C:cytosolic large ribosomal subunit"/>
    <property type="evidence" value="ECO:0007669"/>
    <property type="project" value="TreeGrafter"/>
</dbReference>
<dbReference type="GO" id="GO:0019843">
    <property type="term" value="F:rRNA binding"/>
    <property type="evidence" value="ECO:0007669"/>
    <property type="project" value="UniProtKB-UniRule"/>
</dbReference>
<dbReference type="GO" id="GO:0003735">
    <property type="term" value="F:structural constituent of ribosome"/>
    <property type="evidence" value="ECO:0007669"/>
    <property type="project" value="InterPro"/>
</dbReference>
<dbReference type="GO" id="GO:0000049">
    <property type="term" value="F:tRNA binding"/>
    <property type="evidence" value="ECO:0007669"/>
    <property type="project" value="UniProtKB-KW"/>
</dbReference>
<dbReference type="GO" id="GO:0006412">
    <property type="term" value="P:translation"/>
    <property type="evidence" value="ECO:0007669"/>
    <property type="project" value="UniProtKB-UniRule"/>
</dbReference>
<dbReference type="CDD" id="cd01433">
    <property type="entry name" value="Ribosomal_L16_L10e"/>
    <property type="match status" value="1"/>
</dbReference>
<dbReference type="FunFam" id="3.90.1170.10:FF:000001">
    <property type="entry name" value="50S ribosomal protein L16"/>
    <property type="match status" value="1"/>
</dbReference>
<dbReference type="Gene3D" id="3.90.1170.10">
    <property type="entry name" value="Ribosomal protein L10e/L16"/>
    <property type="match status" value="1"/>
</dbReference>
<dbReference type="HAMAP" id="MF_01342">
    <property type="entry name" value="Ribosomal_uL16"/>
    <property type="match status" value="1"/>
</dbReference>
<dbReference type="InterPro" id="IPR047873">
    <property type="entry name" value="Ribosomal_uL16"/>
</dbReference>
<dbReference type="InterPro" id="IPR000114">
    <property type="entry name" value="Ribosomal_uL16_bact-type"/>
</dbReference>
<dbReference type="InterPro" id="IPR020798">
    <property type="entry name" value="Ribosomal_uL16_CS"/>
</dbReference>
<dbReference type="InterPro" id="IPR016180">
    <property type="entry name" value="Ribosomal_uL16_dom"/>
</dbReference>
<dbReference type="InterPro" id="IPR036920">
    <property type="entry name" value="Ribosomal_uL16_sf"/>
</dbReference>
<dbReference type="NCBIfam" id="TIGR01164">
    <property type="entry name" value="rplP_bact"/>
    <property type="match status" value="1"/>
</dbReference>
<dbReference type="PANTHER" id="PTHR12220">
    <property type="entry name" value="50S/60S RIBOSOMAL PROTEIN L16"/>
    <property type="match status" value="1"/>
</dbReference>
<dbReference type="PANTHER" id="PTHR12220:SF13">
    <property type="entry name" value="LARGE RIBOSOMAL SUBUNIT PROTEIN UL16M"/>
    <property type="match status" value="1"/>
</dbReference>
<dbReference type="Pfam" id="PF00252">
    <property type="entry name" value="Ribosomal_L16"/>
    <property type="match status" value="1"/>
</dbReference>
<dbReference type="PRINTS" id="PR00060">
    <property type="entry name" value="RIBOSOMALL16"/>
</dbReference>
<dbReference type="SUPFAM" id="SSF54686">
    <property type="entry name" value="Ribosomal protein L16p/L10e"/>
    <property type="match status" value="1"/>
</dbReference>
<dbReference type="PROSITE" id="PS00586">
    <property type="entry name" value="RIBOSOMAL_L16_1"/>
    <property type="match status" value="1"/>
</dbReference>
<dbReference type="PROSITE" id="PS00701">
    <property type="entry name" value="RIBOSOMAL_L16_2"/>
    <property type="match status" value="1"/>
</dbReference>
<keyword id="KW-0687">Ribonucleoprotein</keyword>
<keyword id="KW-0689">Ribosomal protein</keyword>
<keyword id="KW-0694">RNA-binding</keyword>
<keyword id="KW-0699">rRNA-binding</keyword>
<keyword id="KW-0820">tRNA-binding</keyword>
<feature type="chain" id="PRO_0000062028" description="Large ribosomal subunit protein uL16">
    <location>
        <begin position="1"/>
        <end position="136"/>
    </location>
</feature>
<comment type="function">
    <text evidence="1">Binds 23S rRNA and is also seen to make contacts with the A and possibly P site tRNAs.</text>
</comment>
<comment type="subunit">
    <text evidence="1">Part of the 50S ribosomal subunit.</text>
</comment>
<comment type="similarity">
    <text evidence="1">Belongs to the universal ribosomal protein uL16 family.</text>
</comment>
<sequence>MLQPKRTKFRKVHKGRNRGIAGGTEVSFGTFGLKAVGRGRLTARQIEAARRAMTRAVKRQGKIWIRVFPDKPITEKPLEVRMGKGKGNVEYWVALIQPGKVLYEMDGVSEEIAREAFALAAAKLPVKTTFVTKTVM</sequence>
<protein>
    <recommendedName>
        <fullName evidence="1">Large ribosomal subunit protein uL16</fullName>
    </recommendedName>
    <alternativeName>
        <fullName evidence="2">50S ribosomal protein L16</fullName>
    </alternativeName>
</protein>
<name>RL16_AGGAC</name>
<evidence type="ECO:0000255" key="1">
    <source>
        <dbReference type="HAMAP-Rule" id="MF_01342"/>
    </source>
</evidence>
<evidence type="ECO:0000305" key="2"/>
<organism>
    <name type="scientific">Aggregatibacter actinomycetemcomitans</name>
    <name type="common">Actinobacillus actinomycetemcomitans</name>
    <name type="synonym">Haemophilus actinomycetemcomitans</name>
    <dbReference type="NCBI Taxonomy" id="714"/>
    <lineage>
        <taxon>Bacteria</taxon>
        <taxon>Pseudomonadati</taxon>
        <taxon>Pseudomonadota</taxon>
        <taxon>Gammaproteobacteria</taxon>
        <taxon>Pasteurellales</taxon>
        <taxon>Pasteurellaceae</taxon>
        <taxon>Aggregatibacter</taxon>
    </lineage>
</organism>
<gene>
    <name evidence="1" type="primary">rplP</name>
</gene>